<reference key="1">
    <citation type="journal article" date="2004" name="Genome Res.">
        <title>The status, quality, and expansion of the NIH full-length cDNA project: the Mammalian Gene Collection (MGC).</title>
        <authorList>
            <consortium name="The MGC Project Team"/>
        </authorList>
    </citation>
    <scope>NUCLEOTIDE SEQUENCE [LARGE SCALE MRNA]</scope>
    <source>
        <tissue>Heart</tissue>
    </source>
</reference>
<keyword id="KW-0963">Cytoplasm</keyword>
<keyword id="KW-1185">Reference proteome</keyword>
<dbReference type="EMBL" id="BC083763">
    <property type="protein sequence ID" value="AAH83763.1"/>
    <property type="molecule type" value="mRNA"/>
</dbReference>
<dbReference type="RefSeq" id="NP_001020227.1">
    <property type="nucleotide sequence ID" value="NM_001025056.2"/>
</dbReference>
<dbReference type="RefSeq" id="NP_001419650.1">
    <property type="nucleotide sequence ID" value="NM_001432721.1"/>
</dbReference>
<dbReference type="RefSeq" id="NP_001419651.1">
    <property type="nucleotide sequence ID" value="NM_001432722.1"/>
</dbReference>
<dbReference type="RefSeq" id="NP_001419652.1">
    <property type="nucleotide sequence ID" value="NM_001432723.1"/>
</dbReference>
<dbReference type="RefSeq" id="NP_001419653.1">
    <property type="nucleotide sequence ID" value="NM_001432724.1"/>
</dbReference>
<dbReference type="RefSeq" id="XP_006245333.1">
    <property type="nucleotide sequence ID" value="XM_006245271.2"/>
</dbReference>
<dbReference type="RefSeq" id="XP_063123701.1">
    <property type="nucleotide sequence ID" value="XM_063267631.1"/>
</dbReference>
<dbReference type="SMR" id="Q5XIC1"/>
<dbReference type="BioGRID" id="272474">
    <property type="interactions" value="1"/>
</dbReference>
<dbReference type="FunCoup" id="Q5XIC1">
    <property type="interactions" value="909"/>
</dbReference>
<dbReference type="STRING" id="10116.ENSRNOP00000074442"/>
<dbReference type="PhosphoSitePlus" id="Q5XIC1"/>
<dbReference type="jPOST" id="Q5XIC1"/>
<dbReference type="PaxDb" id="10116-ENSRNOP00000027064"/>
<dbReference type="Ensembl" id="ENSRNOT00000027064.5">
    <property type="protein sequence ID" value="ENSRNOP00000027064.3"/>
    <property type="gene ID" value="ENSRNOG00000019946.6"/>
</dbReference>
<dbReference type="GeneID" id="501167"/>
<dbReference type="KEGG" id="rno:501167"/>
<dbReference type="UCSC" id="RGD:1560644">
    <property type="organism name" value="rat"/>
</dbReference>
<dbReference type="AGR" id="RGD:1560644"/>
<dbReference type="CTD" id="29926"/>
<dbReference type="RGD" id="1560644">
    <property type="gene designation" value="Gmppa"/>
</dbReference>
<dbReference type="eggNOG" id="KOG1460">
    <property type="taxonomic scope" value="Eukaryota"/>
</dbReference>
<dbReference type="GeneTree" id="ENSGT00940000157018"/>
<dbReference type="HOGENOM" id="CLU_029499_3_0_1"/>
<dbReference type="InParanoid" id="Q5XIC1"/>
<dbReference type="OrthoDB" id="285674at2759"/>
<dbReference type="PhylomeDB" id="Q5XIC1"/>
<dbReference type="TreeFam" id="TF300832"/>
<dbReference type="Reactome" id="R-RNO-446205">
    <property type="pathway name" value="Synthesis of GDP-mannose"/>
</dbReference>
<dbReference type="PRO" id="PR:Q5XIC1"/>
<dbReference type="Proteomes" id="UP000002494">
    <property type="component" value="Chromosome 9"/>
</dbReference>
<dbReference type="Bgee" id="ENSRNOG00000019946">
    <property type="expression patterns" value="Expressed in pancreas and 20 other cell types or tissues"/>
</dbReference>
<dbReference type="ExpressionAtlas" id="Q5XIC1">
    <property type="expression patterns" value="baseline and differential"/>
</dbReference>
<dbReference type="GO" id="GO:0005737">
    <property type="term" value="C:cytoplasm"/>
    <property type="evidence" value="ECO:0000318"/>
    <property type="project" value="GO_Central"/>
</dbReference>
<dbReference type="GO" id="GO:0120508">
    <property type="term" value="C:GDP-mannose pyrophosphorylase complex"/>
    <property type="evidence" value="ECO:0000250"/>
    <property type="project" value="FlyBase"/>
</dbReference>
<dbReference type="GO" id="GO:0019899">
    <property type="term" value="F:enzyme binding"/>
    <property type="evidence" value="ECO:0000266"/>
    <property type="project" value="RGD"/>
</dbReference>
<dbReference type="GO" id="GO:0004857">
    <property type="term" value="F:enzyme inhibitor activity"/>
    <property type="evidence" value="ECO:0000266"/>
    <property type="project" value="RGD"/>
</dbReference>
<dbReference type="GO" id="GO:0140299">
    <property type="term" value="F:molecular sensor activity"/>
    <property type="evidence" value="ECO:0000266"/>
    <property type="project" value="RGD"/>
</dbReference>
<dbReference type="GO" id="GO:0016740">
    <property type="term" value="F:transferase activity"/>
    <property type="evidence" value="ECO:0007669"/>
    <property type="project" value="InterPro"/>
</dbReference>
<dbReference type="GO" id="GO:0050890">
    <property type="term" value="P:cognition"/>
    <property type="evidence" value="ECO:0000266"/>
    <property type="project" value="RGD"/>
</dbReference>
<dbReference type="GO" id="GO:0009298">
    <property type="term" value="P:GDP-mannose biosynthetic process"/>
    <property type="evidence" value="ECO:0000266"/>
    <property type="project" value="RGD"/>
</dbReference>
<dbReference type="GO" id="GO:0019673">
    <property type="term" value="P:GDP-mannose metabolic process"/>
    <property type="evidence" value="ECO:0000266"/>
    <property type="project" value="RGD"/>
</dbReference>
<dbReference type="GO" id="GO:0009100">
    <property type="term" value="P:glycoprotein metabolic process"/>
    <property type="evidence" value="ECO:0000266"/>
    <property type="project" value="RGD"/>
</dbReference>
<dbReference type="GO" id="GO:0061744">
    <property type="term" value="P:motor behavior"/>
    <property type="evidence" value="ECO:0000266"/>
    <property type="project" value="RGD"/>
</dbReference>
<dbReference type="GO" id="GO:0048644">
    <property type="term" value="P:muscle organ morphogenesis"/>
    <property type="evidence" value="ECO:0000266"/>
    <property type="project" value="RGD"/>
</dbReference>
<dbReference type="GO" id="GO:0009890">
    <property type="term" value="P:negative regulation of biosynthetic process"/>
    <property type="evidence" value="ECO:0000266"/>
    <property type="project" value="RGD"/>
</dbReference>
<dbReference type="GO" id="GO:0045934">
    <property type="term" value="P:negative regulation of nucleobase-containing compound metabolic process"/>
    <property type="evidence" value="ECO:0000266"/>
    <property type="project" value="RGD"/>
</dbReference>
<dbReference type="GO" id="GO:0045936">
    <property type="term" value="P:negative regulation of phosphate metabolic process"/>
    <property type="evidence" value="ECO:0000266"/>
    <property type="project" value="RGD"/>
</dbReference>
<dbReference type="GO" id="GO:0062014">
    <property type="term" value="P:negative regulation of small molecule metabolic process"/>
    <property type="evidence" value="ECO:0000266"/>
    <property type="project" value="RGD"/>
</dbReference>
<dbReference type="GO" id="GO:0050905">
    <property type="term" value="P:neuromuscular process"/>
    <property type="evidence" value="ECO:0000266"/>
    <property type="project" value="RGD"/>
</dbReference>
<dbReference type="GO" id="GO:0051402">
    <property type="term" value="P:neuron apoptotic process"/>
    <property type="evidence" value="ECO:0000266"/>
    <property type="project" value="RGD"/>
</dbReference>
<dbReference type="GO" id="GO:0006486">
    <property type="term" value="P:protein glycosylation"/>
    <property type="evidence" value="ECO:0000266"/>
    <property type="project" value="RGD"/>
</dbReference>
<dbReference type="GO" id="GO:0060538">
    <property type="term" value="P:skeletal muscle organ development"/>
    <property type="evidence" value="ECO:0000266"/>
    <property type="project" value="RGD"/>
</dbReference>
<dbReference type="GO" id="GO:0021537">
    <property type="term" value="P:telencephalon development"/>
    <property type="evidence" value="ECO:0000266"/>
    <property type="project" value="RGD"/>
</dbReference>
<dbReference type="CDD" id="cd06428">
    <property type="entry name" value="M1P_guanylylT_A_like_N"/>
    <property type="match status" value="1"/>
</dbReference>
<dbReference type="FunFam" id="3.90.550.10:FF:000071">
    <property type="entry name" value="Mannose-1-phosphate guanyltransferase alpha"/>
    <property type="match status" value="1"/>
</dbReference>
<dbReference type="FunFam" id="2.160.10.10:FF:000023">
    <property type="entry name" value="Mannose-1-phosphate guanyltransferase alpha (Predicted)"/>
    <property type="match status" value="1"/>
</dbReference>
<dbReference type="Gene3D" id="2.160.10.10">
    <property type="entry name" value="Hexapeptide repeat proteins"/>
    <property type="match status" value="1"/>
</dbReference>
<dbReference type="Gene3D" id="3.90.550.10">
    <property type="entry name" value="Spore Coat Polysaccharide Biosynthesis Protein SpsA, Chain A"/>
    <property type="match status" value="1"/>
</dbReference>
<dbReference type="InterPro" id="IPR056729">
    <property type="entry name" value="GMPPB_C"/>
</dbReference>
<dbReference type="InterPro" id="IPR018357">
    <property type="entry name" value="Hexapep_transf_CS"/>
</dbReference>
<dbReference type="InterPro" id="IPR050486">
    <property type="entry name" value="Mannose-1P_guanyltransferase"/>
</dbReference>
<dbReference type="InterPro" id="IPR005835">
    <property type="entry name" value="NTP_transferase_dom"/>
</dbReference>
<dbReference type="InterPro" id="IPR029044">
    <property type="entry name" value="Nucleotide-diphossugar_trans"/>
</dbReference>
<dbReference type="PANTHER" id="PTHR22572">
    <property type="entry name" value="SUGAR-1-PHOSPHATE GUANYL TRANSFERASE"/>
    <property type="match status" value="1"/>
</dbReference>
<dbReference type="Pfam" id="PF25087">
    <property type="entry name" value="GMPPB_C"/>
    <property type="match status" value="1"/>
</dbReference>
<dbReference type="Pfam" id="PF00483">
    <property type="entry name" value="NTP_transferase"/>
    <property type="match status" value="1"/>
</dbReference>
<dbReference type="SUPFAM" id="SSF53448">
    <property type="entry name" value="Nucleotide-diphospho-sugar transferases"/>
    <property type="match status" value="1"/>
</dbReference>
<dbReference type="PROSITE" id="PS00101">
    <property type="entry name" value="HEXAPEP_TRANSFERASES"/>
    <property type="match status" value="1"/>
</dbReference>
<name>GMPPA_RAT</name>
<organism>
    <name type="scientific">Rattus norvegicus</name>
    <name type="common">Rat</name>
    <dbReference type="NCBI Taxonomy" id="10116"/>
    <lineage>
        <taxon>Eukaryota</taxon>
        <taxon>Metazoa</taxon>
        <taxon>Chordata</taxon>
        <taxon>Craniata</taxon>
        <taxon>Vertebrata</taxon>
        <taxon>Euteleostomi</taxon>
        <taxon>Mammalia</taxon>
        <taxon>Eutheria</taxon>
        <taxon>Euarchontoglires</taxon>
        <taxon>Glires</taxon>
        <taxon>Rodentia</taxon>
        <taxon>Myomorpha</taxon>
        <taxon>Muroidea</taxon>
        <taxon>Muridae</taxon>
        <taxon>Murinae</taxon>
        <taxon>Rattus</taxon>
    </lineage>
</organism>
<sequence length="420" mass="46191">MLKAVILIGGPQKGTRFRPLSFEVPKPLFPVAGVPMIQHHIEACAQVPGMQEILLIGFYQPDEALTQFLEAAQQEFNLPVRYLQEFTPLGTGGGLYHFRDQILAGAPEAFFVLNADVCSDFPLSAMLDAHRLQRHPFLLLGTTANRTQSLNYGCIVENPQTHEVLHYVEKPSTFISDIINCGIYLFSPEALKPLRDVFQRNQQDGQLEESPGSWPGAGTIRLEQDVFSALAGQGQIYVHLTDGIWSQIKSAGSALYASRLYLGRYQITHPERLARHTAGGPRIRGNVYIHPTAKVAPSAVLGPNVSIGKGVTIGEGVRLRESIVLHGATLQEHTCVLHSIVGWGSTVGRWARVEGTPNDPNPNDPRARMDSESLFKDGKLLPAITILGCRVRIPAEVLILNSIVLPHKELSRSFTNQIIL</sequence>
<gene>
    <name type="primary">Gmppa</name>
</gene>
<comment type="function">
    <text evidence="2">Regulatory subunit of the GMPPA-GMPPB mannose-1-phosphate guanylyltransferase complex; reduces the catalytic activity of GMPPB when part of the complex. Mediates allosteric feedback inhibition of GMPPB catalytic activity upon binding GDP-alpha-D-mannose. Together with GMPPB regulates GDP-alpha-D-mannose levels.</text>
</comment>
<comment type="subunit">
    <text evidence="2">Component of the GMPPA-GMPPB mannose-1-phosphate guanylyltransferase complex composed of 4 GMPPA subunits and 8 GMPPB subunits; the complex is organized into three layers, a central layer made up of 2 GMPPA dimers sandwiched between two layers each made up of 2 GMPPB dimers.</text>
</comment>
<comment type="subcellular location">
    <subcellularLocation>
        <location evidence="1">Cytoplasm</location>
    </subcellularLocation>
</comment>
<comment type="domain">
    <text evidence="2">The N-terminal substrate-binding domain adopts a Rossman-like fold and has a binding pocket for GTP or GDP-alpha-D-mannose.</text>
</comment>
<comment type="domain">
    <text evidence="2">The C-terminal domain consists of a series of tandem hexapeptide repeats that adopt a beta-helix conformation. The beta-helix forms several protein interaction surfaces involved in assembly of the GMPPA-GMPPB mannose-1-phosphate guanylyltransferase complex. A loop extending from the C-terminal domain (C-loop) is involved in interaction with other subunits of the GMPPA-GMPPB complex and may be involved in allosteric inhibition of GMPPB catalytic activity by GMPPA.</text>
</comment>
<comment type="similarity">
    <text evidence="3">Belongs to the transferase hexapeptide repeat family.</text>
</comment>
<proteinExistence type="evidence at transcript level"/>
<evidence type="ECO:0000250" key="1"/>
<evidence type="ECO:0000250" key="2">
    <source>
        <dbReference type="UniProtKB" id="Q96IJ6"/>
    </source>
</evidence>
<evidence type="ECO:0000305" key="3"/>
<protein>
    <recommendedName>
        <fullName evidence="3">Mannose-1-phosphate guanylyltransferase regulatory subunit alpha</fullName>
    </recommendedName>
    <alternativeName>
        <fullName>GDP-mannose pyrophosphorylase A</fullName>
    </alternativeName>
    <alternativeName>
        <fullName>GTP-mannose-1-phosphate guanylyltransferase alpha</fullName>
    </alternativeName>
</protein>
<accession>Q5XIC1</accession>
<feature type="chain" id="PRO_0000327875" description="Mannose-1-phosphate guanylyltransferase regulatory subunit alpha">
    <location>
        <begin position="1"/>
        <end position="420"/>
    </location>
</feature>
<feature type="region of interest" description="Substrate-binding domain" evidence="2">
    <location>
        <begin position="2"/>
        <end position="251"/>
    </location>
</feature>
<feature type="region of interest" description="Hexapeptide repeat domain" evidence="2">
    <location>
        <begin position="273"/>
        <end position="420"/>
    </location>
</feature>
<feature type="region of interest" description="C-loop" evidence="2">
    <location>
        <begin position="356"/>
        <end position="384"/>
    </location>
</feature>
<feature type="binding site" evidence="2">
    <location>
        <position position="85"/>
    </location>
    <ligand>
        <name>GDP-alpha-D-mannose</name>
        <dbReference type="ChEBI" id="CHEBI:57527"/>
    </ligand>
</feature>
<feature type="binding site" evidence="2">
    <location>
        <position position="247"/>
    </location>
    <ligand>
        <name>GDP-alpha-D-mannose</name>
        <dbReference type="ChEBI" id="CHEBI:57527"/>
    </ligand>
</feature>